<keyword id="KW-0067">ATP-binding</keyword>
<keyword id="KW-0315">Glutamine amidotransferase</keyword>
<keyword id="KW-0436">Ligase</keyword>
<keyword id="KW-0460">Magnesium</keyword>
<keyword id="KW-0479">Metal-binding</keyword>
<keyword id="KW-0547">Nucleotide-binding</keyword>
<keyword id="KW-0665">Pyrimidine biosynthesis</keyword>
<reference key="1">
    <citation type="journal article" date="2007" name="Microbiology">
        <title>Comparative analysis of the Corynebacterium glutamicum group and complete genome sequence of strain R.</title>
        <authorList>
            <person name="Yukawa H."/>
            <person name="Omumasaba C.A."/>
            <person name="Nonaka H."/>
            <person name="Kos P."/>
            <person name="Okai N."/>
            <person name="Suzuki N."/>
            <person name="Suda M."/>
            <person name="Tsuge Y."/>
            <person name="Watanabe J."/>
            <person name="Ikeda Y."/>
            <person name="Vertes A.A."/>
            <person name="Inui M."/>
        </authorList>
    </citation>
    <scope>NUCLEOTIDE SEQUENCE [LARGE SCALE GENOMIC DNA]</scope>
    <source>
        <strain>R</strain>
    </source>
</reference>
<dbReference type="EC" id="6.3.4.2" evidence="1"/>
<dbReference type="EMBL" id="AP009044">
    <property type="protein sequence ID" value="BAF54470.1"/>
    <property type="molecule type" value="Genomic_DNA"/>
</dbReference>
<dbReference type="RefSeq" id="WP_003856281.1">
    <property type="nucleotide sequence ID" value="NC_009342.1"/>
</dbReference>
<dbReference type="SMR" id="A4QE10"/>
<dbReference type="MEROPS" id="C26.964"/>
<dbReference type="GeneID" id="1019392"/>
<dbReference type="KEGG" id="cgt:cgR_1478"/>
<dbReference type="HOGENOM" id="CLU_011675_5_0_11"/>
<dbReference type="PhylomeDB" id="A4QE10"/>
<dbReference type="UniPathway" id="UPA00159">
    <property type="reaction ID" value="UER00277"/>
</dbReference>
<dbReference type="Proteomes" id="UP000006698">
    <property type="component" value="Chromosome"/>
</dbReference>
<dbReference type="GO" id="GO:0005829">
    <property type="term" value="C:cytosol"/>
    <property type="evidence" value="ECO:0007669"/>
    <property type="project" value="TreeGrafter"/>
</dbReference>
<dbReference type="GO" id="GO:0005524">
    <property type="term" value="F:ATP binding"/>
    <property type="evidence" value="ECO:0007669"/>
    <property type="project" value="UniProtKB-KW"/>
</dbReference>
<dbReference type="GO" id="GO:0003883">
    <property type="term" value="F:CTP synthase activity"/>
    <property type="evidence" value="ECO:0007669"/>
    <property type="project" value="UniProtKB-UniRule"/>
</dbReference>
<dbReference type="GO" id="GO:0004359">
    <property type="term" value="F:glutaminase activity"/>
    <property type="evidence" value="ECO:0007669"/>
    <property type="project" value="RHEA"/>
</dbReference>
<dbReference type="GO" id="GO:0042802">
    <property type="term" value="F:identical protein binding"/>
    <property type="evidence" value="ECO:0007669"/>
    <property type="project" value="TreeGrafter"/>
</dbReference>
<dbReference type="GO" id="GO:0046872">
    <property type="term" value="F:metal ion binding"/>
    <property type="evidence" value="ECO:0007669"/>
    <property type="project" value="UniProtKB-KW"/>
</dbReference>
<dbReference type="GO" id="GO:0044210">
    <property type="term" value="P:'de novo' CTP biosynthetic process"/>
    <property type="evidence" value="ECO:0007669"/>
    <property type="project" value="UniProtKB-UniRule"/>
</dbReference>
<dbReference type="GO" id="GO:0019856">
    <property type="term" value="P:pyrimidine nucleobase biosynthetic process"/>
    <property type="evidence" value="ECO:0007669"/>
    <property type="project" value="TreeGrafter"/>
</dbReference>
<dbReference type="CDD" id="cd03113">
    <property type="entry name" value="CTPS_N"/>
    <property type="match status" value="1"/>
</dbReference>
<dbReference type="CDD" id="cd01746">
    <property type="entry name" value="GATase1_CTP_Synthase"/>
    <property type="match status" value="1"/>
</dbReference>
<dbReference type="FunFam" id="3.40.50.300:FF:000009">
    <property type="entry name" value="CTP synthase"/>
    <property type="match status" value="1"/>
</dbReference>
<dbReference type="FunFam" id="3.40.50.880:FF:000002">
    <property type="entry name" value="CTP synthase"/>
    <property type="match status" value="1"/>
</dbReference>
<dbReference type="Gene3D" id="3.40.50.880">
    <property type="match status" value="1"/>
</dbReference>
<dbReference type="Gene3D" id="3.40.50.300">
    <property type="entry name" value="P-loop containing nucleotide triphosphate hydrolases"/>
    <property type="match status" value="1"/>
</dbReference>
<dbReference type="HAMAP" id="MF_01227">
    <property type="entry name" value="PyrG"/>
    <property type="match status" value="1"/>
</dbReference>
<dbReference type="InterPro" id="IPR029062">
    <property type="entry name" value="Class_I_gatase-like"/>
</dbReference>
<dbReference type="InterPro" id="IPR004468">
    <property type="entry name" value="CTP_synthase"/>
</dbReference>
<dbReference type="InterPro" id="IPR017456">
    <property type="entry name" value="CTP_synthase_N"/>
</dbReference>
<dbReference type="InterPro" id="IPR017926">
    <property type="entry name" value="GATASE"/>
</dbReference>
<dbReference type="InterPro" id="IPR033828">
    <property type="entry name" value="GATase1_CTP_Synthase"/>
</dbReference>
<dbReference type="InterPro" id="IPR027417">
    <property type="entry name" value="P-loop_NTPase"/>
</dbReference>
<dbReference type="NCBIfam" id="NF003792">
    <property type="entry name" value="PRK05380.1"/>
    <property type="match status" value="1"/>
</dbReference>
<dbReference type="NCBIfam" id="TIGR00337">
    <property type="entry name" value="PyrG"/>
    <property type="match status" value="1"/>
</dbReference>
<dbReference type="PANTHER" id="PTHR11550">
    <property type="entry name" value="CTP SYNTHASE"/>
    <property type="match status" value="1"/>
</dbReference>
<dbReference type="PANTHER" id="PTHR11550:SF0">
    <property type="entry name" value="CTP SYNTHASE-RELATED"/>
    <property type="match status" value="1"/>
</dbReference>
<dbReference type="Pfam" id="PF06418">
    <property type="entry name" value="CTP_synth_N"/>
    <property type="match status" value="1"/>
</dbReference>
<dbReference type="Pfam" id="PF00117">
    <property type="entry name" value="GATase"/>
    <property type="match status" value="1"/>
</dbReference>
<dbReference type="SUPFAM" id="SSF52317">
    <property type="entry name" value="Class I glutamine amidotransferase-like"/>
    <property type="match status" value="1"/>
</dbReference>
<dbReference type="SUPFAM" id="SSF52540">
    <property type="entry name" value="P-loop containing nucleoside triphosphate hydrolases"/>
    <property type="match status" value="1"/>
</dbReference>
<dbReference type="PROSITE" id="PS51273">
    <property type="entry name" value="GATASE_TYPE_1"/>
    <property type="match status" value="1"/>
</dbReference>
<comment type="function">
    <text evidence="1">Catalyzes the ATP-dependent amination of UTP to CTP with either L-glutamine or ammonia as the source of nitrogen. Regulates intracellular CTP levels through interactions with the four ribonucleotide triphosphates.</text>
</comment>
<comment type="catalytic activity">
    <reaction evidence="1">
        <text>UTP + L-glutamine + ATP + H2O = CTP + L-glutamate + ADP + phosphate + 2 H(+)</text>
        <dbReference type="Rhea" id="RHEA:26426"/>
        <dbReference type="ChEBI" id="CHEBI:15377"/>
        <dbReference type="ChEBI" id="CHEBI:15378"/>
        <dbReference type="ChEBI" id="CHEBI:29985"/>
        <dbReference type="ChEBI" id="CHEBI:30616"/>
        <dbReference type="ChEBI" id="CHEBI:37563"/>
        <dbReference type="ChEBI" id="CHEBI:43474"/>
        <dbReference type="ChEBI" id="CHEBI:46398"/>
        <dbReference type="ChEBI" id="CHEBI:58359"/>
        <dbReference type="ChEBI" id="CHEBI:456216"/>
        <dbReference type="EC" id="6.3.4.2"/>
    </reaction>
</comment>
<comment type="catalytic activity">
    <reaction evidence="1">
        <text>L-glutamine + H2O = L-glutamate + NH4(+)</text>
        <dbReference type="Rhea" id="RHEA:15889"/>
        <dbReference type="ChEBI" id="CHEBI:15377"/>
        <dbReference type="ChEBI" id="CHEBI:28938"/>
        <dbReference type="ChEBI" id="CHEBI:29985"/>
        <dbReference type="ChEBI" id="CHEBI:58359"/>
    </reaction>
</comment>
<comment type="catalytic activity">
    <reaction evidence="1">
        <text>UTP + NH4(+) + ATP = CTP + ADP + phosphate + 2 H(+)</text>
        <dbReference type="Rhea" id="RHEA:16597"/>
        <dbReference type="ChEBI" id="CHEBI:15378"/>
        <dbReference type="ChEBI" id="CHEBI:28938"/>
        <dbReference type="ChEBI" id="CHEBI:30616"/>
        <dbReference type="ChEBI" id="CHEBI:37563"/>
        <dbReference type="ChEBI" id="CHEBI:43474"/>
        <dbReference type="ChEBI" id="CHEBI:46398"/>
        <dbReference type="ChEBI" id="CHEBI:456216"/>
    </reaction>
</comment>
<comment type="activity regulation">
    <text evidence="1">Allosterically activated by GTP, when glutamine is the substrate; GTP has no effect on the reaction when ammonia is the substrate. The allosteric effector GTP functions by stabilizing the protein conformation that binds the tetrahedral intermediate(s) formed during glutamine hydrolysis. Inhibited by the product CTP, via allosteric rather than competitive inhibition.</text>
</comment>
<comment type="pathway">
    <text evidence="1">Pyrimidine metabolism; CTP biosynthesis via de novo pathway; CTP from UDP: step 2/2.</text>
</comment>
<comment type="subunit">
    <text evidence="1">Homotetramer.</text>
</comment>
<comment type="miscellaneous">
    <text evidence="1">CTPSs have evolved a hybrid strategy for distinguishing between UTP and CTP. The overlapping regions of the product feedback inhibitory and substrate sites recognize a common feature in both compounds, the triphosphate moiety. To differentiate isosteric substrate and product pyrimidine rings, an additional pocket far from the expected kinase/ligase catalytic site, specifically recognizes the cytosine and ribose portions of the product inhibitor.</text>
</comment>
<comment type="similarity">
    <text evidence="1">Belongs to the CTP synthase family.</text>
</comment>
<organism>
    <name type="scientific">Corynebacterium glutamicum (strain R)</name>
    <dbReference type="NCBI Taxonomy" id="340322"/>
    <lineage>
        <taxon>Bacteria</taxon>
        <taxon>Bacillati</taxon>
        <taxon>Actinomycetota</taxon>
        <taxon>Actinomycetes</taxon>
        <taxon>Mycobacteriales</taxon>
        <taxon>Corynebacteriaceae</taxon>
        <taxon>Corynebacterium</taxon>
    </lineage>
</organism>
<accession>A4QE10</accession>
<proteinExistence type="inferred from homology"/>
<protein>
    <recommendedName>
        <fullName evidence="1">CTP synthase</fullName>
        <ecNumber evidence="1">6.3.4.2</ecNumber>
    </recommendedName>
    <alternativeName>
        <fullName evidence="1">Cytidine 5'-triphosphate synthase</fullName>
    </alternativeName>
    <alternativeName>
        <fullName evidence="1">Cytidine triphosphate synthetase</fullName>
        <shortName evidence="1">CTP synthetase</shortName>
        <shortName evidence="1">CTPS</shortName>
    </alternativeName>
    <alternativeName>
        <fullName evidence="1">UTP--ammonia ligase</fullName>
    </alternativeName>
</protein>
<name>PYRG_CORGB</name>
<evidence type="ECO:0000255" key="1">
    <source>
        <dbReference type="HAMAP-Rule" id="MF_01227"/>
    </source>
</evidence>
<sequence length="554" mass="60574">MTSSRKVRPTKHIFVTGGVVSSLGKGLTAASLGQLLIARGLSVTMQKLDPYLNVDPGTMNPFEHGEVFVTEDGAETDLDLGHYERFLDRNLGLNANVTTGKVYSTVIAKERRGEYLGKTVQVIPHITDEIKARILSMGEPDAHGNAPDVVISEVGGTVGDIESQPFLEAARQVRHEIGRENCFFIHCSLVPYLATSGELKTKPTQHSVAELRGIGILPDALVLRCDREVPQGLKDKIAMMCDVDYEGVVSCPDSSSIYNIPDVLYREHLDTFIIRRLGLPFRDVDWSTWHDLLERVNNPRHELTVGIVGKYIDLPDAYLSVVEAVRAAGYANWTRTNIKWITSDDCETPSGAMKALSGLDAIVVPGGFGIRGIEGKIGAITFAREHKIPLLGLCLGLQCTVIEAARQAGLEQASSTEFDPAATQPVIATMEEQKAAVSGEADLGGTMRLGAYPATLEEGSLVAELYGTTEVSERHRHRYEVNNAYRAQIAEGSDLVFSGTSPDGHLVEFVEYPKEVHPYLVATQAHPEYKSRPTHAHPLFYGLVKTALELRVHP</sequence>
<feature type="chain" id="PRO_1000139425" description="CTP synthase">
    <location>
        <begin position="1"/>
        <end position="554"/>
    </location>
</feature>
<feature type="domain" description="Glutamine amidotransferase type-1" evidence="1">
    <location>
        <begin position="304"/>
        <end position="553"/>
    </location>
</feature>
<feature type="region of interest" description="Amidoligase domain" evidence="1">
    <location>
        <begin position="1"/>
        <end position="279"/>
    </location>
</feature>
<feature type="active site" description="Nucleophile; for glutamine hydrolysis" evidence="1">
    <location>
        <position position="394"/>
    </location>
</feature>
<feature type="active site" evidence="1">
    <location>
        <position position="526"/>
    </location>
</feature>
<feature type="active site" evidence="1">
    <location>
        <position position="528"/>
    </location>
</feature>
<feature type="binding site" evidence="1">
    <location>
        <position position="21"/>
    </location>
    <ligand>
        <name>CTP</name>
        <dbReference type="ChEBI" id="CHEBI:37563"/>
        <note>allosteric inhibitor</note>
    </ligand>
</feature>
<feature type="binding site" evidence="1">
    <location>
        <position position="21"/>
    </location>
    <ligand>
        <name>UTP</name>
        <dbReference type="ChEBI" id="CHEBI:46398"/>
    </ligand>
</feature>
<feature type="binding site" evidence="1">
    <location>
        <begin position="22"/>
        <end position="27"/>
    </location>
    <ligand>
        <name>ATP</name>
        <dbReference type="ChEBI" id="CHEBI:30616"/>
    </ligand>
</feature>
<feature type="binding site" evidence="1">
    <location>
        <position position="79"/>
    </location>
    <ligand>
        <name>ATP</name>
        <dbReference type="ChEBI" id="CHEBI:30616"/>
    </ligand>
</feature>
<feature type="binding site" evidence="1">
    <location>
        <position position="79"/>
    </location>
    <ligand>
        <name>Mg(2+)</name>
        <dbReference type="ChEBI" id="CHEBI:18420"/>
    </ligand>
</feature>
<feature type="binding site" evidence="1">
    <location>
        <position position="153"/>
    </location>
    <ligand>
        <name>Mg(2+)</name>
        <dbReference type="ChEBI" id="CHEBI:18420"/>
    </ligand>
</feature>
<feature type="binding site" evidence="1">
    <location>
        <begin position="160"/>
        <end position="162"/>
    </location>
    <ligand>
        <name>CTP</name>
        <dbReference type="ChEBI" id="CHEBI:37563"/>
        <note>allosteric inhibitor</note>
    </ligand>
</feature>
<feature type="binding site" evidence="1">
    <location>
        <begin position="200"/>
        <end position="205"/>
    </location>
    <ligand>
        <name>CTP</name>
        <dbReference type="ChEBI" id="CHEBI:37563"/>
        <note>allosteric inhibitor</note>
    </ligand>
</feature>
<feature type="binding site" evidence="1">
    <location>
        <begin position="200"/>
        <end position="205"/>
    </location>
    <ligand>
        <name>UTP</name>
        <dbReference type="ChEBI" id="CHEBI:46398"/>
    </ligand>
</feature>
<feature type="binding site" evidence="1">
    <location>
        <position position="236"/>
    </location>
    <ligand>
        <name>CTP</name>
        <dbReference type="ChEBI" id="CHEBI:37563"/>
        <note>allosteric inhibitor</note>
    </ligand>
</feature>
<feature type="binding site" evidence="1">
    <location>
        <position position="236"/>
    </location>
    <ligand>
        <name>UTP</name>
        <dbReference type="ChEBI" id="CHEBI:46398"/>
    </ligand>
</feature>
<feature type="binding site" evidence="1">
    <location>
        <position position="367"/>
    </location>
    <ligand>
        <name>L-glutamine</name>
        <dbReference type="ChEBI" id="CHEBI:58359"/>
    </ligand>
</feature>
<feature type="binding site" evidence="1">
    <location>
        <begin position="395"/>
        <end position="398"/>
    </location>
    <ligand>
        <name>L-glutamine</name>
        <dbReference type="ChEBI" id="CHEBI:58359"/>
    </ligand>
</feature>
<feature type="binding site" evidence="1">
    <location>
        <position position="417"/>
    </location>
    <ligand>
        <name>L-glutamine</name>
        <dbReference type="ChEBI" id="CHEBI:58359"/>
    </ligand>
</feature>
<feature type="binding site" evidence="1">
    <location>
        <position position="478"/>
    </location>
    <ligand>
        <name>L-glutamine</name>
        <dbReference type="ChEBI" id="CHEBI:58359"/>
    </ligand>
</feature>
<gene>
    <name evidence="1" type="primary">pyrG</name>
    <name type="ordered locus">cgR_1478</name>
</gene>